<evidence type="ECO:0000255" key="1"/>
<evidence type="ECO:0000255" key="2">
    <source>
        <dbReference type="PROSITE-ProRule" id="PRU00363"/>
    </source>
</evidence>
<evidence type="ECO:0000269" key="3">
    <source>
    </source>
</evidence>
<evidence type="ECO:0000305" key="4"/>
<comment type="function">
    <text evidence="3">As this protein is expressed upon bacterial infection, it may have antimicrobial activity.</text>
</comment>
<comment type="subcellular location">
    <subcellularLocation>
        <location>Secreted</location>
    </subcellularLocation>
</comment>
<comment type="tissue specificity">
    <text evidence="3">Very highly expressed in midgut, and highly expressed in fat body, silk gland and epidermis.</text>
</comment>
<comment type="induction">
    <text evidence="3">By bacteria (E.coli and M.luteus).</text>
</comment>
<comment type="similarity">
    <text evidence="4">Belongs to the insect defense protein family.</text>
</comment>
<reference key="1">
    <citation type="journal article" date="2006" name="BMC Genomics">
        <title>Analysis of bacteria-challenged wild silkmoth, Antheraea mylitta (lepidoptera) transcriptome reveals potential immune genes.</title>
        <authorList>
            <person name="Gandhe A.S."/>
            <person name="Arunkumar K.P."/>
            <person name="John S.H."/>
            <person name="Nagaraju J."/>
        </authorList>
    </citation>
    <scope>NUCLEOTIDE SEQUENCE [MRNA]</scope>
    <scope>FUNCTION</scope>
    <scope>TISSUE SPECIFICITY</scope>
    <scope>INDUCTION</scope>
    <source>
        <tissue>Fat body</tissue>
    </source>
</reference>
<protein>
    <recommendedName>
        <fullName>Putative defense protein 1</fullName>
        <shortName>DFP-1</shortName>
    </recommendedName>
</protein>
<sequence>MMFAYIVAVVSALALTSAFPTGAPRSACFDMIPGHFANPKLEPAPYTITTPISAVKGGNSVEVTISGKTPEDTMRGILLEARQGDNIVGTWTVPPGDDFSQPMNCGEPNNAVTHKRHSESADKQTVSYVWTAPSDLEGDVVFMVTIVKDYSNFWVRQTSAPVKILSHH</sequence>
<proteinExistence type="evidence at transcript level"/>
<feature type="signal peptide" evidence="1">
    <location>
        <begin position="1"/>
        <end position="18"/>
    </location>
</feature>
<feature type="chain" id="PRO_0000372766" description="Putative defense protein 1">
    <location>
        <begin position="19"/>
        <end position="168"/>
    </location>
</feature>
<feature type="domain" description="Reelin" evidence="2">
    <location>
        <begin position="19"/>
        <end position="168"/>
    </location>
</feature>
<feature type="disulfide bond" evidence="1">
    <location>
        <begin position="28"/>
        <end position="105"/>
    </location>
</feature>
<organism>
    <name type="scientific">Antheraea mylitta</name>
    <name type="common">Tasar silkworm</name>
    <dbReference type="NCBI Taxonomy" id="34739"/>
    <lineage>
        <taxon>Eukaryota</taxon>
        <taxon>Metazoa</taxon>
        <taxon>Ecdysozoa</taxon>
        <taxon>Arthropoda</taxon>
        <taxon>Hexapoda</taxon>
        <taxon>Insecta</taxon>
        <taxon>Pterygota</taxon>
        <taxon>Neoptera</taxon>
        <taxon>Endopterygota</taxon>
        <taxon>Lepidoptera</taxon>
        <taxon>Glossata</taxon>
        <taxon>Ditrysia</taxon>
        <taxon>Bombycoidea</taxon>
        <taxon>Saturniidae</taxon>
        <taxon>Saturniinae</taxon>
        <taxon>Saturniini</taxon>
        <taxon>Antheraea</taxon>
    </lineage>
</organism>
<accession>Q0Q029</accession>
<keyword id="KW-0044">Antibiotic</keyword>
<keyword id="KW-0929">Antimicrobial</keyword>
<keyword id="KW-1015">Disulfide bond</keyword>
<keyword id="KW-0391">Immunity</keyword>
<keyword id="KW-0399">Innate immunity</keyword>
<keyword id="KW-0964">Secreted</keyword>
<keyword id="KW-0732">Signal</keyword>
<name>DFP1_ANTMY</name>
<dbReference type="EMBL" id="DQ666501">
    <property type="protein sequence ID" value="ABG72705.1"/>
    <property type="molecule type" value="mRNA"/>
</dbReference>
<dbReference type="SMR" id="Q0Q029"/>
<dbReference type="GO" id="GO:0005576">
    <property type="term" value="C:extracellular region"/>
    <property type="evidence" value="ECO:0000314"/>
    <property type="project" value="UniProtKB"/>
</dbReference>
<dbReference type="GO" id="GO:0016020">
    <property type="term" value="C:membrane"/>
    <property type="evidence" value="ECO:0007669"/>
    <property type="project" value="TreeGrafter"/>
</dbReference>
<dbReference type="GO" id="GO:0042742">
    <property type="term" value="P:defense response to bacterium"/>
    <property type="evidence" value="ECO:0007669"/>
    <property type="project" value="UniProtKB-KW"/>
</dbReference>
<dbReference type="GO" id="GO:0042832">
    <property type="term" value="P:defense response to protozoan"/>
    <property type="evidence" value="ECO:0000314"/>
    <property type="project" value="UniProtKB"/>
</dbReference>
<dbReference type="GO" id="GO:0045087">
    <property type="term" value="P:innate immune response"/>
    <property type="evidence" value="ECO:0007669"/>
    <property type="project" value="UniProtKB-KW"/>
</dbReference>
<dbReference type="CDD" id="cd08544">
    <property type="entry name" value="Reeler"/>
    <property type="match status" value="1"/>
</dbReference>
<dbReference type="FunFam" id="2.60.40.4060:FF:000003">
    <property type="entry name" value="Ferric chelate reductase 1"/>
    <property type="match status" value="1"/>
</dbReference>
<dbReference type="Gene3D" id="2.60.40.4060">
    <property type="entry name" value="Reeler domain"/>
    <property type="match status" value="1"/>
</dbReference>
<dbReference type="InterPro" id="IPR051237">
    <property type="entry name" value="Ferric-chelate_Red/DefProt"/>
</dbReference>
<dbReference type="InterPro" id="IPR002861">
    <property type="entry name" value="Reeler_dom"/>
</dbReference>
<dbReference type="InterPro" id="IPR042307">
    <property type="entry name" value="Reeler_sf"/>
</dbReference>
<dbReference type="PANTHER" id="PTHR45828:SF9">
    <property type="entry name" value="CELL WALL INTEGRITY AND STRESS RESPONSE COMPONENT 4-LIKE-RELATED"/>
    <property type="match status" value="1"/>
</dbReference>
<dbReference type="PANTHER" id="PTHR45828">
    <property type="entry name" value="CYTOCHROME B561/FERRIC REDUCTASE TRANSMEMBRANE"/>
    <property type="match status" value="1"/>
</dbReference>
<dbReference type="Pfam" id="PF02014">
    <property type="entry name" value="Reeler"/>
    <property type="match status" value="1"/>
</dbReference>
<dbReference type="PROSITE" id="PS51019">
    <property type="entry name" value="REELIN"/>
    <property type="match status" value="1"/>
</dbReference>